<protein>
    <recommendedName>
        <fullName evidence="1">Glutamyl-tRNA reductase 2</fullName>
        <shortName evidence="1">GluTR 2</shortName>
        <ecNumber evidence="1">1.2.1.70</ecNumber>
    </recommendedName>
</protein>
<accession>Q2IKT3</accession>
<name>HEM12_ANADE</name>
<organism>
    <name type="scientific">Anaeromyxobacter dehalogenans (strain 2CP-C)</name>
    <dbReference type="NCBI Taxonomy" id="290397"/>
    <lineage>
        <taxon>Bacteria</taxon>
        <taxon>Pseudomonadati</taxon>
        <taxon>Myxococcota</taxon>
        <taxon>Myxococcia</taxon>
        <taxon>Myxococcales</taxon>
        <taxon>Cystobacterineae</taxon>
        <taxon>Anaeromyxobacteraceae</taxon>
        <taxon>Anaeromyxobacter</taxon>
    </lineage>
</organism>
<gene>
    <name evidence="1" type="primary">hemA2</name>
    <name type="ordered locus">Adeh_2493</name>
</gene>
<sequence>MTGDRRLFLVGLSHKSAPIDVRERVALTGDALKAALCELKAMEGVTEALVVSTCNRVEVFVHSDRPDAARRFFTERSPAAADHLYAKDGVEAVRHLFRVASSLDSMVVGEQQILGQVKEAYGLASAASAAGSYFSRLCNRAFATAKRVRTETEIGRGATSMSQVAVELVEKIFGRLEGRAILLVGAGKMGALSAKALAVLGADRILVTNRSPERGLALAAQVSGSYRGWEELQRLLGEADVVIVSTGAPTYVVTRESMHAAMKARRRRSICLIDLAVPRNVDPACAELSDVYAYDVDDMERVVATSKQARQGEAIRAEAIVEAEVMAFAKEREARAALPVLAQLRRHAERIARAEAERTLAQVGGKLDDKGRKSVEAMAQAIVNKLLHGPTSRLKEAASSGDSALPGAAAELFGIENETAGGERREGGAEGAAAAPGAGPVRSQGT</sequence>
<comment type="function">
    <text evidence="1">Catalyzes the NADPH-dependent reduction of glutamyl-tRNA(Glu) to glutamate 1-semialdehyde (GSA).</text>
</comment>
<comment type="catalytic activity">
    <reaction evidence="1">
        <text>(S)-4-amino-5-oxopentanoate + tRNA(Glu) + NADP(+) = L-glutamyl-tRNA(Glu) + NADPH + H(+)</text>
        <dbReference type="Rhea" id="RHEA:12344"/>
        <dbReference type="Rhea" id="RHEA-COMP:9663"/>
        <dbReference type="Rhea" id="RHEA-COMP:9680"/>
        <dbReference type="ChEBI" id="CHEBI:15378"/>
        <dbReference type="ChEBI" id="CHEBI:57501"/>
        <dbReference type="ChEBI" id="CHEBI:57783"/>
        <dbReference type="ChEBI" id="CHEBI:58349"/>
        <dbReference type="ChEBI" id="CHEBI:78442"/>
        <dbReference type="ChEBI" id="CHEBI:78520"/>
        <dbReference type="EC" id="1.2.1.70"/>
    </reaction>
</comment>
<comment type="pathway">
    <text evidence="1">Porphyrin-containing compound metabolism; protoporphyrin-IX biosynthesis; 5-aminolevulinate from L-glutamyl-tRNA(Glu): step 1/2.</text>
</comment>
<comment type="subunit">
    <text evidence="1">Homodimer.</text>
</comment>
<comment type="domain">
    <text evidence="1">Possesses an unusual extended V-shaped dimeric structure with each monomer consisting of three distinct domains arranged along a curved 'spinal' alpha-helix. The N-terminal catalytic domain specifically recognizes the glutamate moiety of the substrate. The second domain is the NADPH-binding domain, and the third C-terminal domain is responsible for dimerization.</text>
</comment>
<comment type="miscellaneous">
    <text evidence="1">During catalysis, the active site Cys acts as a nucleophile attacking the alpha-carbonyl group of tRNA-bound glutamate with the formation of a thioester intermediate between enzyme and glutamate, and the concomitant release of tRNA(Glu). The thioester intermediate is finally reduced by direct hydride transfer from NADPH, to form the product GSA.</text>
</comment>
<comment type="similarity">
    <text evidence="1">Belongs to the glutamyl-tRNA reductase family.</text>
</comment>
<dbReference type="EC" id="1.2.1.70" evidence="1"/>
<dbReference type="EMBL" id="CP000251">
    <property type="protein sequence ID" value="ABC82263.1"/>
    <property type="molecule type" value="Genomic_DNA"/>
</dbReference>
<dbReference type="RefSeq" id="WP_011421545.1">
    <property type="nucleotide sequence ID" value="NC_007760.1"/>
</dbReference>
<dbReference type="SMR" id="Q2IKT3"/>
<dbReference type="STRING" id="290397.Adeh_2493"/>
<dbReference type="KEGG" id="ade:Adeh_2493"/>
<dbReference type="eggNOG" id="COG0373">
    <property type="taxonomic scope" value="Bacteria"/>
</dbReference>
<dbReference type="HOGENOM" id="CLU_035113_2_2_7"/>
<dbReference type="OrthoDB" id="110209at2"/>
<dbReference type="UniPathway" id="UPA00251">
    <property type="reaction ID" value="UER00316"/>
</dbReference>
<dbReference type="Proteomes" id="UP000001935">
    <property type="component" value="Chromosome"/>
</dbReference>
<dbReference type="GO" id="GO:0008883">
    <property type="term" value="F:glutamyl-tRNA reductase activity"/>
    <property type="evidence" value="ECO:0007669"/>
    <property type="project" value="UniProtKB-UniRule"/>
</dbReference>
<dbReference type="GO" id="GO:0050661">
    <property type="term" value="F:NADP binding"/>
    <property type="evidence" value="ECO:0007669"/>
    <property type="project" value="InterPro"/>
</dbReference>
<dbReference type="GO" id="GO:0019353">
    <property type="term" value="P:protoporphyrinogen IX biosynthetic process from glutamate"/>
    <property type="evidence" value="ECO:0007669"/>
    <property type="project" value="TreeGrafter"/>
</dbReference>
<dbReference type="CDD" id="cd05213">
    <property type="entry name" value="NAD_bind_Glutamyl_tRNA_reduct"/>
    <property type="match status" value="1"/>
</dbReference>
<dbReference type="FunFam" id="3.30.460.30:FF:000001">
    <property type="entry name" value="Glutamyl-tRNA reductase"/>
    <property type="match status" value="1"/>
</dbReference>
<dbReference type="FunFam" id="3.40.50.720:FF:000031">
    <property type="entry name" value="Glutamyl-tRNA reductase"/>
    <property type="match status" value="1"/>
</dbReference>
<dbReference type="Gene3D" id="3.30.460.30">
    <property type="entry name" value="Glutamyl-tRNA reductase, N-terminal domain"/>
    <property type="match status" value="1"/>
</dbReference>
<dbReference type="Gene3D" id="3.40.50.720">
    <property type="entry name" value="NAD(P)-binding Rossmann-like Domain"/>
    <property type="match status" value="1"/>
</dbReference>
<dbReference type="HAMAP" id="MF_00087">
    <property type="entry name" value="Glu_tRNA_reductase"/>
    <property type="match status" value="1"/>
</dbReference>
<dbReference type="InterPro" id="IPR000343">
    <property type="entry name" value="4pyrrol_synth_GluRdtase"/>
</dbReference>
<dbReference type="InterPro" id="IPR015896">
    <property type="entry name" value="4pyrrol_synth_GluRdtase_dimer"/>
</dbReference>
<dbReference type="InterPro" id="IPR015895">
    <property type="entry name" value="4pyrrol_synth_GluRdtase_N"/>
</dbReference>
<dbReference type="InterPro" id="IPR018214">
    <property type="entry name" value="GluRdtase_CS"/>
</dbReference>
<dbReference type="InterPro" id="IPR036453">
    <property type="entry name" value="GluRdtase_dimer_dom_sf"/>
</dbReference>
<dbReference type="InterPro" id="IPR036343">
    <property type="entry name" value="GluRdtase_N_sf"/>
</dbReference>
<dbReference type="InterPro" id="IPR036291">
    <property type="entry name" value="NAD(P)-bd_dom_sf"/>
</dbReference>
<dbReference type="InterPro" id="IPR006151">
    <property type="entry name" value="Shikm_DH/Glu-tRNA_Rdtase"/>
</dbReference>
<dbReference type="NCBIfam" id="TIGR01035">
    <property type="entry name" value="hemA"/>
    <property type="match status" value="1"/>
</dbReference>
<dbReference type="PANTHER" id="PTHR43013">
    <property type="entry name" value="GLUTAMYL-TRNA REDUCTASE"/>
    <property type="match status" value="1"/>
</dbReference>
<dbReference type="PANTHER" id="PTHR43013:SF1">
    <property type="entry name" value="GLUTAMYL-TRNA REDUCTASE"/>
    <property type="match status" value="1"/>
</dbReference>
<dbReference type="Pfam" id="PF00745">
    <property type="entry name" value="GlutR_dimer"/>
    <property type="match status" value="1"/>
</dbReference>
<dbReference type="Pfam" id="PF05201">
    <property type="entry name" value="GlutR_N"/>
    <property type="match status" value="1"/>
</dbReference>
<dbReference type="Pfam" id="PF01488">
    <property type="entry name" value="Shikimate_DH"/>
    <property type="match status" value="1"/>
</dbReference>
<dbReference type="PIRSF" id="PIRSF000445">
    <property type="entry name" value="4pyrrol_synth_GluRdtase"/>
    <property type="match status" value="1"/>
</dbReference>
<dbReference type="SUPFAM" id="SSF69742">
    <property type="entry name" value="Glutamyl tRNA-reductase catalytic, N-terminal domain"/>
    <property type="match status" value="1"/>
</dbReference>
<dbReference type="SUPFAM" id="SSF69075">
    <property type="entry name" value="Glutamyl tRNA-reductase dimerization domain"/>
    <property type="match status" value="1"/>
</dbReference>
<dbReference type="SUPFAM" id="SSF51735">
    <property type="entry name" value="NAD(P)-binding Rossmann-fold domains"/>
    <property type="match status" value="1"/>
</dbReference>
<dbReference type="PROSITE" id="PS00747">
    <property type="entry name" value="GLUTR"/>
    <property type="match status" value="1"/>
</dbReference>
<reference key="1">
    <citation type="submission" date="2006-01" db="EMBL/GenBank/DDBJ databases">
        <title>Complete sequence of Anaeromyxobacter dehalogenans 2CP-C.</title>
        <authorList>
            <person name="Copeland A."/>
            <person name="Lucas S."/>
            <person name="Lapidus A."/>
            <person name="Barry K."/>
            <person name="Detter J.C."/>
            <person name="Glavina T."/>
            <person name="Hammon N."/>
            <person name="Israni S."/>
            <person name="Pitluck S."/>
            <person name="Brettin T."/>
            <person name="Bruce D."/>
            <person name="Han C."/>
            <person name="Tapia R."/>
            <person name="Gilna P."/>
            <person name="Kiss H."/>
            <person name="Schmutz J."/>
            <person name="Larimer F."/>
            <person name="Land M."/>
            <person name="Kyrpides N."/>
            <person name="Anderson I."/>
            <person name="Sanford R.A."/>
            <person name="Ritalahti K.M."/>
            <person name="Thomas H.S."/>
            <person name="Kirby J.R."/>
            <person name="Zhulin I.B."/>
            <person name="Loeffler F.E."/>
            <person name="Richardson P."/>
        </authorList>
    </citation>
    <scope>NUCLEOTIDE SEQUENCE [LARGE SCALE GENOMIC DNA]</scope>
    <source>
        <strain>2CP-C</strain>
    </source>
</reference>
<keyword id="KW-0521">NADP</keyword>
<keyword id="KW-0560">Oxidoreductase</keyword>
<keyword id="KW-0627">Porphyrin biosynthesis</keyword>
<keyword id="KW-1185">Reference proteome</keyword>
<feature type="chain" id="PRO_0000335006" description="Glutamyl-tRNA reductase 2">
    <location>
        <begin position="1"/>
        <end position="446"/>
    </location>
</feature>
<feature type="region of interest" description="Disordered" evidence="2">
    <location>
        <begin position="409"/>
        <end position="446"/>
    </location>
</feature>
<feature type="compositionally biased region" description="Low complexity" evidence="2">
    <location>
        <begin position="431"/>
        <end position="440"/>
    </location>
</feature>
<feature type="active site" description="Nucleophile" evidence="1">
    <location>
        <position position="54"/>
    </location>
</feature>
<feature type="binding site" evidence="1">
    <location>
        <begin position="53"/>
        <end position="56"/>
    </location>
    <ligand>
        <name>substrate</name>
    </ligand>
</feature>
<feature type="binding site" evidence="1">
    <location>
        <position position="105"/>
    </location>
    <ligand>
        <name>substrate</name>
    </ligand>
</feature>
<feature type="binding site" evidence="1">
    <location>
        <begin position="110"/>
        <end position="112"/>
    </location>
    <ligand>
        <name>substrate</name>
    </ligand>
</feature>
<feature type="binding site" evidence="1">
    <location>
        <position position="116"/>
    </location>
    <ligand>
        <name>substrate</name>
    </ligand>
</feature>
<feature type="binding site" evidence="1">
    <location>
        <begin position="185"/>
        <end position="190"/>
    </location>
    <ligand>
        <name>NADP(+)</name>
        <dbReference type="ChEBI" id="CHEBI:58349"/>
    </ligand>
</feature>
<feature type="site" description="Important for activity" evidence="1">
    <location>
        <position position="95"/>
    </location>
</feature>
<evidence type="ECO:0000255" key="1">
    <source>
        <dbReference type="HAMAP-Rule" id="MF_00087"/>
    </source>
</evidence>
<evidence type="ECO:0000256" key="2">
    <source>
        <dbReference type="SAM" id="MobiDB-lite"/>
    </source>
</evidence>
<proteinExistence type="inferred from homology"/>